<name>APAG_CHRSD</name>
<dbReference type="EMBL" id="CP000285">
    <property type="protein sequence ID" value="ABE58278.1"/>
    <property type="molecule type" value="Genomic_DNA"/>
</dbReference>
<dbReference type="RefSeq" id="WP_011506224.1">
    <property type="nucleotide sequence ID" value="NC_007963.1"/>
</dbReference>
<dbReference type="SMR" id="Q1QZ30"/>
<dbReference type="STRING" id="290398.Csal_0921"/>
<dbReference type="GeneID" id="95333677"/>
<dbReference type="KEGG" id="csa:Csal_0921"/>
<dbReference type="eggNOG" id="COG2967">
    <property type="taxonomic scope" value="Bacteria"/>
</dbReference>
<dbReference type="HOGENOM" id="CLU_128074_0_0_6"/>
<dbReference type="OrthoDB" id="9795226at2"/>
<dbReference type="Proteomes" id="UP000000239">
    <property type="component" value="Chromosome"/>
</dbReference>
<dbReference type="GO" id="GO:0070987">
    <property type="term" value="P:error-free translesion synthesis"/>
    <property type="evidence" value="ECO:0007669"/>
    <property type="project" value="TreeGrafter"/>
</dbReference>
<dbReference type="Gene3D" id="2.60.40.1470">
    <property type="entry name" value="ApaG domain"/>
    <property type="match status" value="1"/>
</dbReference>
<dbReference type="HAMAP" id="MF_00791">
    <property type="entry name" value="ApaG"/>
    <property type="match status" value="1"/>
</dbReference>
<dbReference type="InterPro" id="IPR007474">
    <property type="entry name" value="ApaG_domain"/>
</dbReference>
<dbReference type="InterPro" id="IPR036767">
    <property type="entry name" value="ApaG_sf"/>
</dbReference>
<dbReference type="InterPro" id="IPR023065">
    <property type="entry name" value="Uncharacterised_ApaG"/>
</dbReference>
<dbReference type="NCBIfam" id="NF003967">
    <property type="entry name" value="PRK05461.1"/>
    <property type="match status" value="1"/>
</dbReference>
<dbReference type="PANTHER" id="PTHR14289">
    <property type="entry name" value="F-BOX ONLY PROTEIN 3"/>
    <property type="match status" value="1"/>
</dbReference>
<dbReference type="PANTHER" id="PTHR14289:SF16">
    <property type="entry name" value="POLYMERASE DELTA-INTERACTING PROTEIN 2"/>
    <property type="match status" value="1"/>
</dbReference>
<dbReference type="Pfam" id="PF04379">
    <property type="entry name" value="DUF525"/>
    <property type="match status" value="1"/>
</dbReference>
<dbReference type="SUPFAM" id="SSF110069">
    <property type="entry name" value="ApaG-like"/>
    <property type="match status" value="1"/>
</dbReference>
<dbReference type="PROSITE" id="PS51087">
    <property type="entry name" value="APAG"/>
    <property type="match status" value="1"/>
</dbReference>
<organism>
    <name type="scientific">Chromohalobacter salexigens (strain ATCC BAA-138 / DSM 3043 / CIP 106854 / NCIMB 13768 / 1H11)</name>
    <dbReference type="NCBI Taxonomy" id="290398"/>
    <lineage>
        <taxon>Bacteria</taxon>
        <taxon>Pseudomonadati</taxon>
        <taxon>Pseudomonadota</taxon>
        <taxon>Gammaproteobacteria</taxon>
        <taxon>Oceanospirillales</taxon>
        <taxon>Halomonadaceae</taxon>
        <taxon>Chromohalobacter</taxon>
    </lineage>
</organism>
<protein>
    <recommendedName>
        <fullName evidence="1">Protein ApaG</fullName>
    </recommendedName>
</protein>
<evidence type="ECO:0000255" key="1">
    <source>
        <dbReference type="HAMAP-Rule" id="MF_00791"/>
    </source>
</evidence>
<accession>Q1QZ30</accession>
<sequence length="127" mass="14073">MSELVEHIQVHVEPEYQAGESAPGDQRYVFSYTITVHNRSAHSIQLLARHWKITQSSGKVQEVRGKGVIGQQPLIGPGQQFRYTSRAVLDGPVGVMEGSYTCLDTTEQRAFEVPIAAFRLAGPNQVH</sequence>
<reference key="1">
    <citation type="journal article" date="2011" name="Stand. Genomic Sci.">
        <title>Complete genome sequence of the halophilic and highly halotolerant Chromohalobacter salexigens type strain (1H11(T)).</title>
        <authorList>
            <person name="Copeland A."/>
            <person name="O'Connor K."/>
            <person name="Lucas S."/>
            <person name="Lapidus A."/>
            <person name="Berry K.W."/>
            <person name="Detter J.C."/>
            <person name="Del Rio T.G."/>
            <person name="Hammon N."/>
            <person name="Dalin E."/>
            <person name="Tice H."/>
            <person name="Pitluck S."/>
            <person name="Bruce D."/>
            <person name="Goodwin L."/>
            <person name="Han C."/>
            <person name="Tapia R."/>
            <person name="Saunders E."/>
            <person name="Schmutz J."/>
            <person name="Brettin T."/>
            <person name="Larimer F."/>
            <person name="Land M."/>
            <person name="Hauser L."/>
            <person name="Vargas C."/>
            <person name="Nieto J.J."/>
            <person name="Kyrpides N.C."/>
            <person name="Ivanova N."/>
            <person name="Goker M."/>
            <person name="Klenk H.P."/>
            <person name="Csonka L.N."/>
            <person name="Woyke T."/>
        </authorList>
    </citation>
    <scope>NUCLEOTIDE SEQUENCE [LARGE SCALE GENOMIC DNA]</scope>
    <source>
        <strain>ATCC BAA-138 / DSM 3043 / CIP 106854 / NCIMB 13768 / 1H11</strain>
    </source>
</reference>
<feature type="chain" id="PRO_1000083613" description="Protein ApaG">
    <location>
        <begin position="1"/>
        <end position="127"/>
    </location>
</feature>
<feature type="domain" description="ApaG" evidence="1">
    <location>
        <begin position="2"/>
        <end position="127"/>
    </location>
</feature>
<proteinExistence type="inferred from homology"/>
<gene>
    <name evidence="1" type="primary">apaG</name>
    <name type="ordered locus">Csal_0921</name>
</gene>
<keyword id="KW-1185">Reference proteome</keyword>